<accession>Q8GYG1</accession>
<accession>Q9LMF7</accession>
<accession>Q9XI86</accession>
<keyword id="KW-0175">Coiled coil</keyword>
<keyword id="KW-0256">Endoplasmic reticulum</keyword>
<keyword id="KW-0931">ER-Golgi transport</keyword>
<keyword id="KW-0333">Golgi apparatus</keyword>
<keyword id="KW-0472">Membrane</keyword>
<keyword id="KW-0488">Methylation</keyword>
<keyword id="KW-0653">Protein transport</keyword>
<keyword id="KW-1185">Reference proteome</keyword>
<keyword id="KW-0732">Signal</keyword>
<keyword id="KW-0812">Transmembrane</keyword>
<keyword id="KW-1133">Transmembrane helix</keyword>
<keyword id="KW-0813">Transport</keyword>
<evidence type="ECO:0000250" key="1"/>
<evidence type="ECO:0000255" key="2"/>
<evidence type="ECO:0000255" key="3">
    <source>
        <dbReference type="PROSITE-ProRule" id="PRU00096"/>
    </source>
</evidence>
<evidence type="ECO:0000269" key="4">
    <source>
    </source>
</evidence>
<evidence type="ECO:0000305" key="5"/>
<organism>
    <name type="scientific">Arabidopsis thaliana</name>
    <name type="common">Mouse-ear cress</name>
    <dbReference type="NCBI Taxonomy" id="3702"/>
    <lineage>
        <taxon>Eukaryota</taxon>
        <taxon>Viridiplantae</taxon>
        <taxon>Streptophyta</taxon>
        <taxon>Embryophyta</taxon>
        <taxon>Tracheophyta</taxon>
        <taxon>Spermatophyta</taxon>
        <taxon>Magnoliopsida</taxon>
        <taxon>eudicotyledons</taxon>
        <taxon>Gunneridae</taxon>
        <taxon>Pentapetalae</taxon>
        <taxon>rosids</taxon>
        <taxon>malvids</taxon>
        <taxon>Brassicales</taxon>
        <taxon>Brassicaceae</taxon>
        <taxon>Camelineae</taxon>
        <taxon>Arabidopsis</taxon>
    </lineage>
</organism>
<feature type="signal peptide" evidence="2">
    <location>
        <begin position="1"/>
        <end position="22"/>
    </location>
</feature>
<feature type="chain" id="PRO_0000419787" description="Transmembrane emp24 domain-containing protein p24delta7">
    <location>
        <begin position="23"/>
        <end position="212"/>
    </location>
</feature>
<feature type="topological domain" description="Lumenal" evidence="2">
    <location>
        <begin position="23"/>
        <end position="179"/>
    </location>
</feature>
<feature type="transmembrane region" description="Helical" evidence="2">
    <location>
        <begin position="180"/>
        <end position="200"/>
    </location>
</feature>
<feature type="topological domain" description="Cytoplasmic" evidence="2">
    <location>
        <begin position="201"/>
        <end position="212"/>
    </location>
</feature>
<feature type="domain" description="GOLD" evidence="3">
    <location>
        <begin position="32"/>
        <end position="147"/>
    </location>
</feature>
<feature type="coiled-coil region" evidence="2">
    <location>
        <begin position="162"/>
        <end position="175"/>
    </location>
</feature>
<feature type="short sequence motif" description="COPI vesicle coat-binding" evidence="1">
    <location>
        <begin position="205"/>
        <end position="212"/>
    </location>
</feature>
<feature type="short sequence motif" description="COPII vesicle coat-binding" evidence="1">
    <location>
        <begin position="205"/>
        <end position="206"/>
    </location>
</feature>
<feature type="modified residue" description="Omega-N-methylated arginine" evidence="1">
    <location>
        <position position="165"/>
    </location>
</feature>
<proteinExistence type="evidence at transcript level"/>
<name>P24D7_ARATH</name>
<sequence>MNHRRSSIVLLILSILSPVTLSIRYELLSGHTKCISEEIHANAMTIGKYSIINPHEDHPLPSSHKVTVRVTSPQGTAYHESDGVESGQFSFVAVETGDYISCFSAVDHKPETTLIIDFDWRTGIHTKDWSNVAKKSQVETMEFEVKKLFETVNGIHDEMFYLRDREEEMHNLNIATNSKMAWLSFVSLAVCLSVAGLQFWHLKTFFQKKKLI</sequence>
<reference key="1">
    <citation type="journal article" date="2000" name="Nature">
        <title>Sequence and analysis of chromosome 1 of the plant Arabidopsis thaliana.</title>
        <authorList>
            <person name="Theologis A."/>
            <person name="Ecker J.R."/>
            <person name="Palm C.J."/>
            <person name="Federspiel N.A."/>
            <person name="Kaul S."/>
            <person name="White O."/>
            <person name="Alonso J."/>
            <person name="Altafi H."/>
            <person name="Araujo R."/>
            <person name="Bowman C.L."/>
            <person name="Brooks S.Y."/>
            <person name="Buehler E."/>
            <person name="Chan A."/>
            <person name="Chao Q."/>
            <person name="Chen H."/>
            <person name="Cheuk R.F."/>
            <person name="Chin C.W."/>
            <person name="Chung M.K."/>
            <person name="Conn L."/>
            <person name="Conway A.B."/>
            <person name="Conway A.R."/>
            <person name="Creasy T.H."/>
            <person name="Dewar K."/>
            <person name="Dunn P."/>
            <person name="Etgu P."/>
            <person name="Feldblyum T.V."/>
            <person name="Feng J.-D."/>
            <person name="Fong B."/>
            <person name="Fujii C.Y."/>
            <person name="Gill J.E."/>
            <person name="Goldsmith A.D."/>
            <person name="Haas B."/>
            <person name="Hansen N.F."/>
            <person name="Hughes B."/>
            <person name="Huizar L."/>
            <person name="Hunter J.L."/>
            <person name="Jenkins J."/>
            <person name="Johnson-Hopson C."/>
            <person name="Khan S."/>
            <person name="Khaykin E."/>
            <person name="Kim C.J."/>
            <person name="Koo H.L."/>
            <person name="Kremenetskaia I."/>
            <person name="Kurtz D.B."/>
            <person name="Kwan A."/>
            <person name="Lam B."/>
            <person name="Langin-Hooper S."/>
            <person name="Lee A."/>
            <person name="Lee J.M."/>
            <person name="Lenz C.A."/>
            <person name="Li J.H."/>
            <person name="Li Y.-P."/>
            <person name="Lin X."/>
            <person name="Liu S.X."/>
            <person name="Liu Z.A."/>
            <person name="Luros J.S."/>
            <person name="Maiti R."/>
            <person name="Marziali A."/>
            <person name="Militscher J."/>
            <person name="Miranda M."/>
            <person name="Nguyen M."/>
            <person name="Nierman W.C."/>
            <person name="Osborne B.I."/>
            <person name="Pai G."/>
            <person name="Peterson J."/>
            <person name="Pham P.K."/>
            <person name="Rizzo M."/>
            <person name="Rooney T."/>
            <person name="Rowley D."/>
            <person name="Sakano H."/>
            <person name="Salzberg S.L."/>
            <person name="Schwartz J.R."/>
            <person name="Shinn P."/>
            <person name="Southwick A.M."/>
            <person name="Sun H."/>
            <person name="Tallon L.J."/>
            <person name="Tambunga G."/>
            <person name="Toriumi M.J."/>
            <person name="Town C.D."/>
            <person name="Utterback T."/>
            <person name="Van Aken S."/>
            <person name="Vaysberg M."/>
            <person name="Vysotskaia V.S."/>
            <person name="Walker M."/>
            <person name="Wu D."/>
            <person name="Yu G."/>
            <person name="Fraser C.M."/>
            <person name="Venter J.C."/>
            <person name="Davis R.W."/>
        </authorList>
    </citation>
    <scope>NUCLEOTIDE SEQUENCE [LARGE SCALE GENOMIC DNA]</scope>
    <source>
        <strain>cv. Columbia</strain>
    </source>
</reference>
<reference key="2">
    <citation type="journal article" date="2017" name="Plant J.">
        <title>Araport11: a complete reannotation of the Arabidopsis thaliana reference genome.</title>
        <authorList>
            <person name="Cheng C.Y."/>
            <person name="Krishnakumar V."/>
            <person name="Chan A.P."/>
            <person name="Thibaud-Nissen F."/>
            <person name="Schobel S."/>
            <person name="Town C.D."/>
        </authorList>
    </citation>
    <scope>GENOME REANNOTATION</scope>
    <source>
        <strain>cv. Columbia</strain>
    </source>
</reference>
<reference key="3">
    <citation type="journal article" date="2002" name="Science">
        <title>Functional annotation of a full-length Arabidopsis cDNA collection.</title>
        <authorList>
            <person name="Seki M."/>
            <person name="Narusaka M."/>
            <person name="Kamiya A."/>
            <person name="Ishida J."/>
            <person name="Satou M."/>
            <person name="Sakurai T."/>
            <person name="Nakajima M."/>
            <person name="Enju A."/>
            <person name="Akiyama K."/>
            <person name="Oono Y."/>
            <person name="Muramatsu M."/>
            <person name="Hayashizaki Y."/>
            <person name="Kawai J."/>
            <person name="Carninci P."/>
            <person name="Itoh M."/>
            <person name="Ishii Y."/>
            <person name="Arakawa T."/>
            <person name="Shibata K."/>
            <person name="Shinagawa A."/>
            <person name="Shinozaki K."/>
        </authorList>
    </citation>
    <scope>NUCLEOTIDE SEQUENCE [LARGE SCALE MRNA]</scope>
    <source>
        <strain>cv. Columbia</strain>
    </source>
</reference>
<reference key="4">
    <citation type="journal article" date="2012" name="J. Exp. Bot.">
        <title>Coupled transport of Arabidopsis p24 proteins at the ER-Golgi interface.</title>
        <authorList>
            <person name="Montesinos J.C."/>
            <person name="Sturm S."/>
            <person name="Langhans M."/>
            <person name="Hillmer S."/>
            <person name="Marcote M.J."/>
            <person name="Robinson D.G."/>
            <person name="Aniento F."/>
        </authorList>
    </citation>
    <scope>GENE FAMILY</scope>
    <scope>NOMENCLATURE</scope>
</reference>
<reference key="5">
    <citation type="journal article" date="2012" name="Traffic">
        <title>Subclass-specific localization and trafficking of Arabidopsis p24 proteins in the ER-Golgi interface.</title>
        <authorList>
            <person name="Chen J."/>
            <person name="Qi X."/>
            <person name="Zheng H."/>
        </authorList>
    </citation>
    <scope>GENE FAMILY</scope>
    <scope>SUBCELLULAR LOCATION</scope>
    <scope>COILED-COIL DOMAIN</scope>
</reference>
<gene>
    <name type="ordered locus">At1g14010</name>
    <name type="ORF">F16A14.23</name>
    <name type="ORF">F7A19.10</name>
</gene>
<dbReference type="EMBL" id="AC007576">
    <property type="protein sequence ID" value="AAD39287.1"/>
    <property type="status" value="ALT_SEQ"/>
    <property type="molecule type" value="Genomic_DNA"/>
</dbReference>
<dbReference type="EMBL" id="AC068197">
    <property type="protein sequence ID" value="AAF79411.1"/>
    <property type="status" value="ALT_SEQ"/>
    <property type="molecule type" value="Genomic_DNA"/>
</dbReference>
<dbReference type="EMBL" id="CP002684">
    <property type="protein sequence ID" value="AEE29098.1"/>
    <property type="molecule type" value="Genomic_DNA"/>
</dbReference>
<dbReference type="EMBL" id="AK117657">
    <property type="protein sequence ID" value="BAC42310.1"/>
    <property type="molecule type" value="mRNA"/>
</dbReference>
<dbReference type="PIR" id="D86273">
    <property type="entry name" value="D86273"/>
</dbReference>
<dbReference type="RefSeq" id="NP_172854.1">
    <property type="nucleotide sequence ID" value="NM_101267.4"/>
</dbReference>
<dbReference type="SMR" id="Q8GYG1"/>
<dbReference type="FunCoup" id="Q8GYG1">
    <property type="interactions" value="3491"/>
</dbReference>
<dbReference type="STRING" id="3702.Q8GYG1"/>
<dbReference type="PaxDb" id="3702-AT1G14010.1"/>
<dbReference type="ProteomicsDB" id="248682"/>
<dbReference type="EnsemblPlants" id="AT1G14010.1">
    <property type="protein sequence ID" value="AT1G14010.1"/>
    <property type="gene ID" value="AT1G14010"/>
</dbReference>
<dbReference type="GeneID" id="837961"/>
<dbReference type="Gramene" id="AT1G14010.1">
    <property type="protein sequence ID" value="AT1G14010.1"/>
    <property type="gene ID" value="AT1G14010"/>
</dbReference>
<dbReference type="KEGG" id="ath:AT1G14010"/>
<dbReference type="Araport" id="AT1G14010"/>
<dbReference type="TAIR" id="AT1G14010"/>
<dbReference type="eggNOG" id="KOG1691">
    <property type="taxonomic scope" value="Eukaryota"/>
</dbReference>
<dbReference type="HOGENOM" id="CLU_066963_3_2_1"/>
<dbReference type="InParanoid" id="Q8GYG1"/>
<dbReference type="OMA" id="WRTGIHT"/>
<dbReference type="OrthoDB" id="1929172at2759"/>
<dbReference type="PhylomeDB" id="Q8GYG1"/>
<dbReference type="PRO" id="PR:Q8GYG1"/>
<dbReference type="Proteomes" id="UP000006548">
    <property type="component" value="Chromosome 1"/>
</dbReference>
<dbReference type="ExpressionAtlas" id="Q8GYG1">
    <property type="expression patterns" value="baseline and differential"/>
</dbReference>
<dbReference type="GO" id="GO:0005783">
    <property type="term" value="C:endoplasmic reticulum"/>
    <property type="evidence" value="ECO:0007005"/>
    <property type="project" value="TAIR"/>
</dbReference>
<dbReference type="GO" id="GO:0005789">
    <property type="term" value="C:endoplasmic reticulum membrane"/>
    <property type="evidence" value="ECO:0007669"/>
    <property type="project" value="UniProtKB-SubCell"/>
</dbReference>
<dbReference type="GO" id="GO:0032580">
    <property type="term" value="C:Golgi cisterna membrane"/>
    <property type="evidence" value="ECO:0007669"/>
    <property type="project" value="UniProtKB-SubCell"/>
</dbReference>
<dbReference type="GO" id="GO:0015031">
    <property type="term" value="P:protein transport"/>
    <property type="evidence" value="ECO:0007669"/>
    <property type="project" value="UniProtKB-KW"/>
</dbReference>
<dbReference type="GO" id="GO:0016192">
    <property type="term" value="P:vesicle-mediated transport"/>
    <property type="evidence" value="ECO:0007669"/>
    <property type="project" value="UniProtKB-KW"/>
</dbReference>
<dbReference type="InterPro" id="IPR015720">
    <property type="entry name" value="Emp24-like"/>
</dbReference>
<dbReference type="InterPro" id="IPR009038">
    <property type="entry name" value="GOLD_dom"/>
</dbReference>
<dbReference type="PANTHER" id="PTHR22811">
    <property type="entry name" value="TRANSMEMBRANE EMP24 DOMAIN-CONTAINING PROTEIN"/>
    <property type="match status" value="1"/>
</dbReference>
<dbReference type="Pfam" id="PF01105">
    <property type="entry name" value="EMP24_GP25L"/>
    <property type="match status" value="1"/>
</dbReference>
<dbReference type="SMART" id="SM01190">
    <property type="entry name" value="EMP24_GP25L"/>
    <property type="match status" value="1"/>
</dbReference>
<dbReference type="PROSITE" id="PS50866">
    <property type="entry name" value="GOLD"/>
    <property type="match status" value="1"/>
</dbReference>
<comment type="function">
    <text evidence="1">Involved in vesicular protein trafficking. Mainly functions in the early secretory pathway. Thought to act as cargo receptor at the lumenal side for incorporation of secretory cargo molecules into transport vesicles and to be involved in vesicle coat formation at the cytoplasmic side (By similarity).</text>
</comment>
<comment type="subunit">
    <text evidence="1">Probably oligomerizes with other members of the EMP24/GP25L family. Associates with the COPI vesicle coat (coatomer). Associates with the COPII vesicle coat (coatomer).</text>
</comment>
<comment type="subcellular location">
    <subcellularLocation>
        <location evidence="4">Endoplasmic reticulum membrane</location>
        <topology evidence="4">Single-pass type I membrane protein</topology>
    </subcellularLocation>
    <subcellularLocation>
        <location evidence="4">Golgi apparatus</location>
        <location evidence="4">cis-Golgi network membrane</location>
        <topology evidence="4">Single-pass type I membrane protein</topology>
    </subcellularLocation>
    <subcellularLocation>
        <location evidence="4">Golgi apparatus</location>
        <location evidence="4">Golgi stack membrane</location>
        <topology evidence="4">Single-pass type I membrane protein</topology>
    </subcellularLocation>
    <text evidence="1">Cycles between the endoplasmic reticulum and Golgi via COPI and COPII dependent pathways.</text>
</comment>
<comment type="domain">
    <text evidence="1">The cytoplasmic C-terminal domain contains a functional dilysine-retrieval motif, which is involved in the retrograde Golgi-to-ER transport of the protein.</text>
</comment>
<comment type="similarity">
    <text evidence="5">Belongs to the EMP24/GP25L family.</text>
</comment>
<comment type="sequence caution" evidence="5">
    <conflict type="erroneous gene model prediction">
        <sequence resource="EMBL-CDS" id="AAD39287"/>
    </conflict>
</comment>
<comment type="sequence caution" evidence="5">
    <conflict type="erroneous gene model prediction">
        <sequence resource="EMBL-CDS" id="AAF79411"/>
    </conflict>
</comment>
<protein>
    <recommendedName>
        <fullName>Transmembrane emp24 domain-containing protein p24delta7</fullName>
    </recommendedName>
    <alternativeName>
        <fullName>p24 family protein delta2a</fullName>
        <shortName>p24delta2a</shortName>
    </alternativeName>
    <alternativeName>
        <fullName>p24 family protein delta7</fullName>
        <shortName>p24delta7</shortName>
    </alternativeName>
</protein>